<feature type="chain" id="PRO_0000228337" description="4-hydroxy-tetrahydrodipicolinate reductase">
    <location>
        <begin position="1"/>
        <end position="253"/>
    </location>
</feature>
<feature type="active site" description="Proton donor/acceptor" evidence="1">
    <location>
        <position position="144"/>
    </location>
</feature>
<feature type="active site" description="Proton donor" evidence="1">
    <location>
        <position position="148"/>
    </location>
</feature>
<feature type="binding site" evidence="1">
    <location>
        <begin position="16"/>
        <end position="21"/>
    </location>
    <ligand>
        <name>NAD(+)</name>
        <dbReference type="ChEBI" id="CHEBI:57540"/>
    </ligand>
</feature>
<feature type="binding site" evidence="1">
    <location>
        <position position="44"/>
    </location>
    <ligand>
        <name>NADP(+)</name>
        <dbReference type="ChEBI" id="CHEBI:58349"/>
    </ligand>
</feature>
<feature type="binding site" evidence="1">
    <location>
        <begin position="85"/>
        <end position="87"/>
    </location>
    <ligand>
        <name>NAD(+)</name>
        <dbReference type="ChEBI" id="CHEBI:57540"/>
    </ligand>
</feature>
<feature type="binding site" evidence="1">
    <location>
        <begin position="111"/>
        <end position="114"/>
    </location>
    <ligand>
        <name>NAD(+)</name>
        <dbReference type="ChEBI" id="CHEBI:57540"/>
    </ligand>
</feature>
<feature type="binding site" evidence="1">
    <location>
        <position position="145"/>
    </location>
    <ligand>
        <name>(S)-2,3,4,5-tetrahydrodipicolinate</name>
        <dbReference type="ChEBI" id="CHEBI:16845"/>
    </ligand>
</feature>
<feature type="binding site" evidence="1">
    <location>
        <begin position="154"/>
        <end position="155"/>
    </location>
    <ligand>
        <name>(S)-2,3,4,5-tetrahydrodipicolinate</name>
        <dbReference type="ChEBI" id="CHEBI:16845"/>
    </ligand>
</feature>
<accession>Q3KLZ2</accession>
<comment type="function">
    <text evidence="1">Catalyzes the conversion of 4-hydroxy-tetrahydrodipicolinate (HTPA) to tetrahydrodipicolinate.</text>
</comment>
<comment type="catalytic activity">
    <reaction evidence="1">
        <text>(S)-2,3,4,5-tetrahydrodipicolinate + NAD(+) + H2O = (2S,4S)-4-hydroxy-2,3,4,5-tetrahydrodipicolinate + NADH + H(+)</text>
        <dbReference type="Rhea" id="RHEA:35323"/>
        <dbReference type="ChEBI" id="CHEBI:15377"/>
        <dbReference type="ChEBI" id="CHEBI:15378"/>
        <dbReference type="ChEBI" id="CHEBI:16845"/>
        <dbReference type="ChEBI" id="CHEBI:57540"/>
        <dbReference type="ChEBI" id="CHEBI:57945"/>
        <dbReference type="ChEBI" id="CHEBI:67139"/>
        <dbReference type="EC" id="1.17.1.8"/>
    </reaction>
</comment>
<comment type="catalytic activity">
    <reaction evidence="1">
        <text>(S)-2,3,4,5-tetrahydrodipicolinate + NADP(+) + H2O = (2S,4S)-4-hydroxy-2,3,4,5-tetrahydrodipicolinate + NADPH + H(+)</text>
        <dbReference type="Rhea" id="RHEA:35331"/>
        <dbReference type="ChEBI" id="CHEBI:15377"/>
        <dbReference type="ChEBI" id="CHEBI:15378"/>
        <dbReference type="ChEBI" id="CHEBI:16845"/>
        <dbReference type="ChEBI" id="CHEBI:57783"/>
        <dbReference type="ChEBI" id="CHEBI:58349"/>
        <dbReference type="ChEBI" id="CHEBI:67139"/>
        <dbReference type="EC" id="1.17.1.8"/>
    </reaction>
</comment>
<comment type="pathway">
    <text evidence="1">Amino-acid biosynthesis; L-lysine biosynthesis via DAP pathway; (S)-tetrahydrodipicolinate from L-aspartate: step 4/4.</text>
</comment>
<comment type="subcellular location">
    <subcellularLocation>
        <location evidence="1">Cytoplasm</location>
    </subcellularLocation>
</comment>
<comment type="similarity">
    <text evidence="1">Belongs to the DapB family.</text>
</comment>
<comment type="caution">
    <text evidence="2">Was originally thought to be a dihydrodipicolinate reductase (DHDPR), catalyzing the conversion of dihydrodipicolinate to tetrahydrodipicolinate. However, it was shown in E.coli that the substrate of the enzymatic reaction is not dihydrodipicolinate (DHDP) but in fact (2S,4S)-4-hydroxy-2,3,4,5-tetrahydrodipicolinic acid (HTPA), the product released by the DapA-catalyzed reaction.</text>
</comment>
<organism>
    <name type="scientific">Chlamydia trachomatis serovar A (strain ATCC VR-571B / DSM 19440 / HAR-13)</name>
    <dbReference type="NCBI Taxonomy" id="315277"/>
    <lineage>
        <taxon>Bacteria</taxon>
        <taxon>Pseudomonadati</taxon>
        <taxon>Chlamydiota</taxon>
        <taxon>Chlamydiia</taxon>
        <taxon>Chlamydiales</taxon>
        <taxon>Chlamydiaceae</taxon>
        <taxon>Chlamydia/Chlamydophila group</taxon>
        <taxon>Chlamydia</taxon>
    </lineage>
</organism>
<sequence length="253" mass="27791">MRVADSIMKKSIGLVGDTGRMGVLLTQALLCRPHCFLGKGFSRRSQTSLEEVVTENDILIDFSSPEVTSLLLDFLLKTPRPVIIGTTGFTNDSGVKTKLSALSEYVPVVVCANTSLGAYVQKRLAAFAAKLFSTSYDVRILETHHRAKADAISGTAISLAEAIRSAKAESYEEEPEPFIEMHGSRLGNVCGEHEVSFVGEDERFVIRHEVFSRRVFSGGVLLILEKIMGEGLPKGYYTSDVLYESLFQEKVFG</sequence>
<protein>
    <recommendedName>
        <fullName evidence="1">4-hydroxy-tetrahydrodipicolinate reductase</fullName>
        <shortName evidence="1">HTPA reductase</shortName>
        <ecNumber evidence="1">1.17.1.8</ecNumber>
    </recommendedName>
</protein>
<gene>
    <name evidence="1" type="primary">dapB</name>
    <name type="ordered locus">CTA_0396</name>
</gene>
<keyword id="KW-0028">Amino-acid biosynthesis</keyword>
<keyword id="KW-0963">Cytoplasm</keyword>
<keyword id="KW-0220">Diaminopimelate biosynthesis</keyword>
<keyword id="KW-0457">Lysine biosynthesis</keyword>
<keyword id="KW-0520">NAD</keyword>
<keyword id="KW-0521">NADP</keyword>
<keyword id="KW-0560">Oxidoreductase</keyword>
<evidence type="ECO:0000255" key="1">
    <source>
        <dbReference type="HAMAP-Rule" id="MF_00102"/>
    </source>
</evidence>
<evidence type="ECO:0000305" key="2"/>
<proteinExistence type="inferred from homology"/>
<dbReference type="EC" id="1.17.1.8" evidence="1"/>
<dbReference type="EMBL" id="CP000051">
    <property type="protein sequence ID" value="AAX50630.1"/>
    <property type="molecule type" value="Genomic_DNA"/>
</dbReference>
<dbReference type="RefSeq" id="WP_011324702.1">
    <property type="nucleotide sequence ID" value="NC_007429.1"/>
</dbReference>
<dbReference type="SMR" id="Q3KLZ2"/>
<dbReference type="KEGG" id="cta:CTA_0396"/>
<dbReference type="HOGENOM" id="CLU_047479_2_2_0"/>
<dbReference type="UniPathway" id="UPA00034">
    <property type="reaction ID" value="UER00018"/>
</dbReference>
<dbReference type="Proteomes" id="UP000002532">
    <property type="component" value="Chromosome"/>
</dbReference>
<dbReference type="GO" id="GO:0005829">
    <property type="term" value="C:cytosol"/>
    <property type="evidence" value="ECO:0007669"/>
    <property type="project" value="TreeGrafter"/>
</dbReference>
<dbReference type="GO" id="GO:0008839">
    <property type="term" value="F:4-hydroxy-tetrahydrodipicolinate reductase"/>
    <property type="evidence" value="ECO:0007669"/>
    <property type="project" value="UniProtKB-EC"/>
</dbReference>
<dbReference type="GO" id="GO:0051287">
    <property type="term" value="F:NAD binding"/>
    <property type="evidence" value="ECO:0007669"/>
    <property type="project" value="UniProtKB-UniRule"/>
</dbReference>
<dbReference type="GO" id="GO:0050661">
    <property type="term" value="F:NADP binding"/>
    <property type="evidence" value="ECO:0007669"/>
    <property type="project" value="UniProtKB-UniRule"/>
</dbReference>
<dbReference type="GO" id="GO:0016726">
    <property type="term" value="F:oxidoreductase activity, acting on CH or CH2 groups, NAD or NADP as acceptor"/>
    <property type="evidence" value="ECO:0007669"/>
    <property type="project" value="UniProtKB-UniRule"/>
</dbReference>
<dbReference type="GO" id="GO:0019877">
    <property type="term" value="P:diaminopimelate biosynthetic process"/>
    <property type="evidence" value="ECO:0007669"/>
    <property type="project" value="UniProtKB-UniRule"/>
</dbReference>
<dbReference type="GO" id="GO:0009089">
    <property type="term" value="P:lysine biosynthetic process via diaminopimelate"/>
    <property type="evidence" value="ECO:0007669"/>
    <property type="project" value="UniProtKB-UniRule"/>
</dbReference>
<dbReference type="CDD" id="cd02274">
    <property type="entry name" value="DHDPR_N"/>
    <property type="match status" value="1"/>
</dbReference>
<dbReference type="Gene3D" id="3.30.360.10">
    <property type="entry name" value="Dihydrodipicolinate Reductase, domain 2"/>
    <property type="match status" value="1"/>
</dbReference>
<dbReference type="Gene3D" id="3.40.50.720">
    <property type="entry name" value="NAD(P)-binding Rossmann-like Domain"/>
    <property type="match status" value="1"/>
</dbReference>
<dbReference type="HAMAP" id="MF_00102">
    <property type="entry name" value="DapB"/>
    <property type="match status" value="1"/>
</dbReference>
<dbReference type="InterPro" id="IPR022663">
    <property type="entry name" value="DapB_C"/>
</dbReference>
<dbReference type="InterPro" id="IPR000846">
    <property type="entry name" value="DapB_N"/>
</dbReference>
<dbReference type="InterPro" id="IPR022664">
    <property type="entry name" value="DapB_N_CS"/>
</dbReference>
<dbReference type="InterPro" id="IPR023940">
    <property type="entry name" value="DHDPR_bac"/>
</dbReference>
<dbReference type="InterPro" id="IPR036291">
    <property type="entry name" value="NAD(P)-bd_dom_sf"/>
</dbReference>
<dbReference type="NCBIfam" id="TIGR00036">
    <property type="entry name" value="dapB"/>
    <property type="match status" value="1"/>
</dbReference>
<dbReference type="PANTHER" id="PTHR20836:SF0">
    <property type="entry name" value="4-HYDROXY-TETRAHYDRODIPICOLINATE REDUCTASE 1, CHLOROPLASTIC-RELATED"/>
    <property type="match status" value="1"/>
</dbReference>
<dbReference type="PANTHER" id="PTHR20836">
    <property type="entry name" value="DIHYDRODIPICOLINATE REDUCTASE"/>
    <property type="match status" value="1"/>
</dbReference>
<dbReference type="Pfam" id="PF05173">
    <property type="entry name" value="DapB_C"/>
    <property type="match status" value="1"/>
</dbReference>
<dbReference type="Pfam" id="PF01113">
    <property type="entry name" value="DapB_N"/>
    <property type="match status" value="1"/>
</dbReference>
<dbReference type="PIRSF" id="PIRSF000161">
    <property type="entry name" value="DHPR"/>
    <property type="match status" value="1"/>
</dbReference>
<dbReference type="SUPFAM" id="SSF55347">
    <property type="entry name" value="Glyceraldehyde-3-phosphate dehydrogenase-like, C-terminal domain"/>
    <property type="match status" value="1"/>
</dbReference>
<dbReference type="SUPFAM" id="SSF51735">
    <property type="entry name" value="NAD(P)-binding Rossmann-fold domains"/>
    <property type="match status" value="1"/>
</dbReference>
<dbReference type="PROSITE" id="PS01298">
    <property type="entry name" value="DAPB"/>
    <property type="match status" value="1"/>
</dbReference>
<reference key="1">
    <citation type="journal article" date="2005" name="Infect. Immun.">
        <title>Comparative genomic analysis of Chlamydia trachomatis oculotropic and genitotropic strains.</title>
        <authorList>
            <person name="Carlson J.H."/>
            <person name="Porcella S.F."/>
            <person name="McClarty G."/>
            <person name="Caldwell H.D."/>
        </authorList>
    </citation>
    <scope>NUCLEOTIDE SEQUENCE [LARGE SCALE GENOMIC DNA]</scope>
    <source>
        <strain>ATCC VR-571B / DSM 19440 / HAR-13</strain>
    </source>
</reference>
<name>DAPB_CHLTA</name>